<accession>B8G2P9</accession>
<sequence>MSKPVVAIVGRPNVGKSTLFNRLAGGLVAIVENRPGVTRDRLYRDSEWLGRKFTIIDTGGIEFVNENTSISAQMRRQAEIAIEEADVIVFVIDAQISPTPDDDMIAQTLRRSGKPVILAANKVENFAKTELYEFYNLGLGEPVPISAVHGMNIGDLLDEVVSHFPEDIEEEVDPDTIRIAVVGRPNVGKSSLVNTLLGEERVIVSNIPGTTRDAIDSAFEHEGKHYIIIDTAGMRRKGRIEELTEQYSVSRSLRAVDRSDVILMLLDAGEGVTEQDKKIAGYAHEAGKGIVLVVNKWDLIEKDDKTMNRFEKDIREELGFMQYAPTLFISAKTGQRVTKLLDLVDFVAEQNSTRVATATLNTLVREWVHLNPPPTDKGRRLKVLYATQVGVKPPTFVFFVNDHELMHFSYRRYLENQLRSSFGFEGSPIRMIVRQKDEERE</sequence>
<protein>
    <recommendedName>
        <fullName evidence="1">GTPase Der</fullName>
    </recommendedName>
    <alternativeName>
        <fullName evidence="1">GTP-binding protein EngA</fullName>
    </alternativeName>
</protein>
<comment type="function">
    <text evidence="1">GTPase that plays an essential role in the late steps of ribosome biogenesis.</text>
</comment>
<comment type="subunit">
    <text evidence="1">Associates with the 50S ribosomal subunit.</text>
</comment>
<comment type="similarity">
    <text evidence="1">Belongs to the TRAFAC class TrmE-Era-EngA-EngB-Septin-like GTPase superfamily. EngA (Der) GTPase family.</text>
</comment>
<reference key="1">
    <citation type="journal article" date="2012" name="BMC Microbiol.">
        <title>Genome sequence of Desulfitobacterium hafniense DCB-2, a Gram-positive anaerobe capable of dehalogenation and metal reduction.</title>
        <authorList>
            <person name="Kim S.H."/>
            <person name="Harzman C."/>
            <person name="Davis J.K."/>
            <person name="Hutcheson R."/>
            <person name="Broderick J.B."/>
            <person name="Marsh T.L."/>
            <person name="Tiedje J.M."/>
        </authorList>
    </citation>
    <scope>NUCLEOTIDE SEQUENCE [LARGE SCALE GENOMIC DNA]</scope>
    <source>
        <strain>DSM 10664 / DCB-2</strain>
    </source>
</reference>
<gene>
    <name evidence="1" type="primary">der</name>
    <name type="synonym">engA</name>
    <name type="ordered locus">Dhaf_3381</name>
</gene>
<proteinExistence type="inferred from homology"/>
<feature type="chain" id="PRO_1000124354" description="GTPase Der">
    <location>
        <begin position="1"/>
        <end position="441"/>
    </location>
</feature>
<feature type="domain" description="EngA-type G 1">
    <location>
        <begin position="4"/>
        <end position="168"/>
    </location>
</feature>
<feature type="domain" description="EngA-type G 2">
    <location>
        <begin position="177"/>
        <end position="352"/>
    </location>
</feature>
<feature type="domain" description="KH-like" evidence="1">
    <location>
        <begin position="353"/>
        <end position="437"/>
    </location>
</feature>
<feature type="binding site" evidence="1">
    <location>
        <begin position="10"/>
        <end position="17"/>
    </location>
    <ligand>
        <name>GTP</name>
        <dbReference type="ChEBI" id="CHEBI:37565"/>
        <label>1</label>
    </ligand>
</feature>
<feature type="binding site" evidence="1">
    <location>
        <begin position="57"/>
        <end position="61"/>
    </location>
    <ligand>
        <name>GTP</name>
        <dbReference type="ChEBI" id="CHEBI:37565"/>
        <label>1</label>
    </ligand>
</feature>
<feature type="binding site" evidence="1">
    <location>
        <begin position="121"/>
        <end position="124"/>
    </location>
    <ligand>
        <name>GTP</name>
        <dbReference type="ChEBI" id="CHEBI:37565"/>
        <label>1</label>
    </ligand>
</feature>
<feature type="binding site" evidence="1">
    <location>
        <begin position="183"/>
        <end position="190"/>
    </location>
    <ligand>
        <name>GTP</name>
        <dbReference type="ChEBI" id="CHEBI:37565"/>
        <label>2</label>
    </ligand>
</feature>
<feature type="binding site" evidence="1">
    <location>
        <begin position="230"/>
        <end position="234"/>
    </location>
    <ligand>
        <name>GTP</name>
        <dbReference type="ChEBI" id="CHEBI:37565"/>
        <label>2</label>
    </ligand>
</feature>
<feature type="binding site" evidence="1">
    <location>
        <begin position="295"/>
        <end position="298"/>
    </location>
    <ligand>
        <name>GTP</name>
        <dbReference type="ChEBI" id="CHEBI:37565"/>
        <label>2</label>
    </ligand>
</feature>
<organism>
    <name type="scientific">Desulfitobacterium hafniense (strain DSM 10664 / DCB-2)</name>
    <dbReference type="NCBI Taxonomy" id="272564"/>
    <lineage>
        <taxon>Bacteria</taxon>
        <taxon>Bacillati</taxon>
        <taxon>Bacillota</taxon>
        <taxon>Clostridia</taxon>
        <taxon>Eubacteriales</taxon>
        <taxon>Desulfitobacteriaceae</taxon>
        <taxon>Desulfitobacterium</taxon>
    </lineage>
</organism>
<name>DER_DESHD</name>
<keyword id="KW-0342">GTP-binding</keyword>
<keyword id="KW-0547">Nucleotide-binding</keyword>
<keyword id="KW-0677">Repeat</keyword>
<keyword id="KW-0690">Ribosome biogenesis</keyword>
<dbReference type="EMBL" id="CP001336">
    <property type="protein sequence ID" value="ACL21399.1"/>
    <property type="molecule type" value="Genomic_DNA"/>
</dbReference>
<dbReference type="RefSeq" id="WP_015944579.1">
    <property type="nucleotide sequence ID" value="NC_011830.1"/>
</dbReference>
<dbReference type="SMR" id="B8G2P9"/>
<dbReference type="KEGG" id="dhd:Dhaf_3381"/>
<dbReference type="HOGENOM" id="CLU_016077_6_2_9"/>
<dbReference type="Proteomes" id="UP000007726">
    <property type="component" value="Chromosome"/>
</dbReference>
<dbReference type="GO" id="GO:0016887">
    <property type="term" value="F:ATP hydrolysis activity"/>
    <property type="evidence" value="ECO:0007669"/>
    <property type="project" value="InterPro"/>
</dbReference>
<dbReference type="GO" id="GO:0005525">
    <property type="term" value="F:GTP binding"/>
    <property type="evidence" value="ECO:0007669"/>
    <property type="project" value="UniProtKB-UniRule"/>
</dbReference>
<dbReference type="GO" id="GO:0043022">
    <property type="term" value="F:ribosome binding"/>
    <property type="evidence" value="ECO:0007669"/>
    <property type="project" value="TreeGrafter"/>
</dbReference>
<dbReference type="GO" id="GO:0042254">
    <property type="term" value="P:ribosome biogenesis"/>
    <property type="evidence" value="ECO:0007669"/>
    <property type="project" value="UniProtKB-KW"/>
</dbReference>
<dbReference type="CDD" id="cd01894">
    <property type="entry name" value="EngA1"/>
    <property type="match status" value="1"/>
</dbReference>
<dbReference type="CDD" id="cd01895">
    <property type="entry name" value="EngA2"/>
    <property type="match status" value="1"/>
</dbReference>
<dbReference type="FunFam" id="3.30.300.20:FF:000004">
    <property type="entry name" value="GTPase Der"/>
    <property type="match status" value="1"/>
</dbReference>
<dbReference type="FunFam" id="3.40.50.300:FF:000040">
    <property type="entry name" value="GTPase Der"/>
    <property type="match status" value="1"/>
</dbReference>
<dbReference type="FunFam" id="3.40.50.300:FF:000057">
    <property type="entry name" value="GTPase Der"/>
    <property type="match status" value="1"/>
</dbReference>
<dbReference type="Gene3D" id="3.30.300.20">
    <property type="match status" value="1"/>
</dbReference>
<dbReference type="Gene3D" id="3.40.50.300">
    <property type="entry name" value="P-loop containing nucleotide triphosphate hydrolases"/>
    <property type="match status" value="2"/>
</dbReference>
<dbReference type="HAMAP" id="MF_00195">
    <property type="entry name" value="GTPase_Der"/>
    <property type="match status" value="1"/>
</dbReference>
<dbReference type="InterPro" id="IPR003593">
    <property type="entry name" value="AAA+_ATPase"/>
</dbReference>
<dbReference type="InterPro" id="IPR031166">
    <property type="entry name" value="G_ENGA"/>
</dbReference>
<dbReference type="InterPro" id="IPR006073">
    <property type="entry name" value="GTP-bd"/>
</dbReference>
<dbReference type="InterPro" id="IPR016484">
    <property type="entry name" value="GTPase_Der"/>
</dbReference>
<dbReference type="InterPro" id="IPR032859">
    <property type="entry name" value="KH_dom-like"/>
</dbReference>
<dbReference type="InterPro" id="IPR015946">
    <property type="entry name" value="KH_dom-like_a/b"/>
</dbReference>
<dbReference type="InterPro" id="IPR027417">
    <property type="entry name" value="P-loop_NTPase"/>
</dbReference>
<dbReference type="InterPro" id="IPR005225">
    <property type="entry name" value="Small_GTP-bd"/>
</dbReference>
<dbReference type="NCBIfam" id="TIGR03594">
    <property type="entry name" value="GTPase_EngA"/>
    <property type="match status" value="1"/>
</dbReference>
<dbReference type="NCBIfam" id="TIGR00231">
    <property type="entry name" value="small_GTP"/>
    <property type="match status" value="2"/>
</dbReference>
<dbReference type="PANTHER" id="PTHR43834">
    <property type="entry name" value="GTPASE DER"/>
    <property type="match status" value="1"/>
</dbReference>
<dbReference type="PANTHER" id="PTHR43834:SF6">
    <property type="entry name" value="GTPASE DER"/>
    <property type="match status" value="1"/>
</dbReference>
<dbReference type="Pfam" id="PF14714">
    <property type="entry name" value="KH_dom-like"/>
    <property type="match status" value="1"/>
</dbReference>
<dbReference type="Pfam" id="PF01926">
    <property type="entry name" value="MMR_HSR1"/>
    <property type="match status" value="2"/>
</dbReference>
<dbReference type="PIRSF" id="PIRSF006485">
    <property type="entry name" value="GTP-binding_EngA"/>
    <property type="match status" value="1"/>
</dbReference>
<dbReference type="PRINTS" id="PR00326">
    <property type="entry name" value="GTP1OBG"/>
</dbReference>
<dbReference type="SMART" id="SM00382">
    <property type="entry name" value="AAA"/>
    <property type="match status" value="2"/>
</dbReference>
<dbReference type="SUPFAM" id="SSF52540">
    <property type="entry name" value="P-loop containing nucleoside triphosphate hydrolases"/>
    <property type="match status" value="2"/>
</dbReference>
<dbReference type="PROSITE" id="PS51712">
    <property type="entry name" value="G_ENGA"/>
    <property type="match status" value="2"/>
</dbReference>
<evidence type="ECO:0000255" key="1">
    <source>
        <dbReference type="HAMAP-Rule" id="MF_00195"/>
    </source>
</evidence>